<protein>
    <recommendedName>
        <fullName>Cytochrome P450 119</fullName>
        <ecNumber>1.14.-.-</ecNumber>
    </recommendedName>
</protein>
<feature type="chain" id="PRO_0000343614" description="Cytochrome P450 119">
    <location>
        <begin position="1"/>
        <end position="367"/>
    </location>
</feature>
<feature type="binding site" evidence="1">
    <location>
        <position position="76"/>
    </location>
    <ligand>
        <name>heme</name>
        <dbReference type="ChEBI" id="CHEBI:30413"/>
    </ligand>
</feature>
<feature type="binding site" evidence="2">
    <location>
        <position position="80"/>
    </location>
    <ligand>
        <name>heme</name>
        <dbReference type="ChEBI" id="CHEBI:30413"/>
    </ligand>
</feature>
<feature type="binding site" evidence="1">
    <location>
        <position position="257"/>
    </location>
    <ligand>
        <name>heme</name>
        <dbReference type="ChEBI" id="CHEBI:30413"/>
    </ligand>
</feature>
<feature type="binding site" evidence="2">
    <location>
        <position position="259"/>
    </location>
    <ligand>
        <name>heme</name>
        <dbReference type="ChEBI" id="CHEBI:30413"/>
    </ligand>
</feature>
<feature type="binding site" evidence="2">
    <location>
        <position position="315"/>
    </location>
    <ligand>
        <name>heme</name>
        <dbReference type="ChEBI" id="CHEBI:30413"/>
    </ligand>
</feature>
<feature type="binding site" description="axial binding residue">
    <location>
        <position position="317"/>
    </location>
    <ligand>
        <name>heme</name>
        <dbReference type="ChEBI" id="CHEBI:30413"/>
    </ligand>
    <ligandPart>
        <name>Fe</name>
        <dbReference type="ChEBI" id="CHEBI:18248"/>
    </ligandPart>
</feature>
<feature type="helix" evidence="4">
    <location>
        <begin position="2"/>
        <end position="11"/>
    </location>
</feature>
<feature type="strand" evidence="4">
    <location>
        <begin position="13"/>
        <end position="16"/>
    </location>
</feature>
<feature type="strand" evidence="4">
    <location>
        <begin position="18"/>
        <end position="23"/>
    </location>
</feature>
<feature type="helix" evidence="4">
    <location>
        <begin position="26"/>
        <end position="34"/>
    </location>
</feature>
<feature type="turn" evidence="4">
    <location>
        <begin position="36"/>
        <end position="38"/>
    </location>
</feature>
<feature type="turn" evidence="4">
    <location>
        <begin position="46"/>
        <end position="49"/>
    </location>
</feature>
<feature type="helix" evidence="4">
    <location>
        <begin position="50"/>
        <end position="55"/>
    </location>
</feature>
<feature type="helix" evidence="4">
    <location>
        <begin position="63"/>
        <end position="65"/>
    </location>
</feature>
<feature type="helix" evidence="4">
    <location>
        <begin position="68"/>
        <end position="70"/>
    </location>
</feature>
<feature type="helix" evidence="4">
    <location>
        <begin position="75"/>
        <end position="81"/>
    </location>
</feature>
<feature type="helix" evidence="4">
    <location>
        <begin position="84"/>
        <end position="87"/>
    </location>
</feature>
<feature type="helix" evidence="4">
    <location>
        <begin position="89"/>
        <end position="91"/>
    </location>
</feature>
<feature type="helix" evidence="4">
    <location>
        <begin position="94"/>
        <end position="106"/>
    </location>
</feature>
<feature type="strand" evidence="4">
    <location>
        <begin position="110"/>
        <end position="113"/>
    </location>
</feature>
<feature type="helix" evidence="4">
    <location>
        <begin position="114"/>
        <end position="117"/>
    </location>
</feature>
<feature type="turn" evidence="4">
    <location>
        <begin position="118"/>
        <end position="120"/>
    </location>
</feature>
<feature type="helix" evidence="4">
    <location>
        <begin position="121"/>
        <end position="131"/>
    </location>
</feature>
<feature type="helix" evidence="4">
    <location>
        <begin position="137"/>
        <end position="148"/>
    </location>
</feature>
<feature type="turn" evidence="4">
    <location>
        <begin position="149"/>
        <end position="152"/>
    </location>
</feature>
<feature type="helix" evidence="4">
    <location>
        <begin position="156"/>
        <end position="158"/>
    </location>
</feature>
<feature type="helix" evidence="4">
    <location>
        <begin position="162"/>
        <end position="178"/>
    </location>
</feature>
<feature type="turn" evidence="4">
    <location>
        <begin position="179"/>
        <end position="181"/>
    </location>
</feature>
<feature type="helix" evidence="4">
    <location>
        <begin position="186"/>
        <end position="191"/>
    </location>
</feature>
<feature type="strand" evidence="4">
    <location>
        <begin position="193"/>
        <end position="195"/>
    </location>
</feature>
<feature type="helix" evidence="4">
    <location>
        <begin position="197"/>
        <end position="209"/>
    </location>
</feature>
<feature type="turn" evidence="4">
    <location>
        <begin position="210"/>
        <end position="212"/>
    </location>
</feature>
<feature type="helix" evidence="4">
    <location>
        <begin position="213"/>
        <end position="228"/>
    </location>
</feature>
<feature type="helix" evidence="4">
    <location>
        <begin position="232"/>
        <end position="238"/>
    </location>
</feature>
<feature type="helix" evidence="4">
    <location>
        <begin position="241"/>
        <end position="250"/>
    </location>
</feature>
<feature type="strand" evidence="4">
    <location>
        <begin position="257"/>
        <end position="263"/>
    </location>
</feature>
<feature type="strand" evidence="4">
    <location>
        <begin position="265"/>
        <end position="267"/>
    </location>
</feature>
<feature type="strand" evidence="4">
    <location>
        <begin position="270"/>
        <end position="272"/>
    </location>
</feature>
<feature type="strand" evidence="4">
    <location>
        <begin position="277"/>
        <end position="280"/>
    </location>
</feature>
<feature type="helix" evidence="4">
    <location>
        <begin position="282"/>
        <end position="285"/>
    </location>
</feature>
<feature type="turn" evidence="4">
    <location>
        <begin position="289"/>
        <end position="291"/>
    </location>
</feature>
<feature type="strand" evidence="4">
    <location>
        <begin position="292"/>
        <end position="294"/>
    </location>
</feature>
<feature type="helix" evidence="4">
    <location>
        <begin position="320"/>
        <end position="337"/>
    </location>
</feature>
<feature type="strand" evidence="4">
    <location>
        <begin position="338"/>
        <end position="348"/>
    </location>
</feature>
<feature type="strand" evidence="4">
    <location>
        <begin position="352"/>
        <end position="354"/>
    </location>
</feature>
<feature type="strand" evidence="4">
    <location>
        <begin position="356"/>
        <end position="366"/>
    </location>
</feature>
<comment type="cofactor">
    <cofactor>
        <name>heme</name>
        <dbReference type="ChEBI" id="CHEBI:30413"/>
    </cofactor>
    <text>Binds 1 heme group per subunit.</text>
</comment>
<comment type="biophysicochemical properties">
    <temperatureDependence>
        <text evidence="2">Active up to 80 degrees Celsius. Thermostable.</text>
    </temperatureDependence>
</comment>
<comment type="subcellular location">
    <subcellularLocation>
        <location evidence="1">Cytoplasm</location>
    </subcellularLocation>
</comment>
<comment type="similarity">
    <text evidence="3">Belongs to the cytochrome P450 family.</text>
</comment>
<keyword id="KW-0002">3D-structure</keyword>
<keyword id="KW-0963">Cytoplasm</keyword>
<keyword id="KW-0349">Heme</keyword>
<keyword id="KW-0408">Iron</keyword>
<keyword id="KW-0479">Metal-binding</keyword>
<keyword id="KW-0503">Monooxygenase</keyword>
<keyword id="KW-0560">Oxidoreductase</keyword>
<keyword id="KW-1185">Reference proteome</keyword>
<accession>Q972I2</accession>
<accession>F9VNW4</accession>
<gene>
    <name type="primary">cyp119</name>
    <name type="ordered locus">STK_11480</name>
</gene>
<reference key="1">
    <citation type="journal article" date="2001" name="DNA Res.">
        <title>Complete genome sequence of an aerobic thermoacidophilic Crenarchaeon, Sulfolobus tokodaii strain7.</title>
        <authorList>
            <person name="Kawarabayasi Y."/>
            <person name="Hino Y."/>
            <person name="Horikawa H."/>
            <person name="Jin-no K."/>
            <person name="Takahashi M."/>
            <person name="Sekine M."/>
            <person name="Baba S."/>
            <person name="Ankai A."/>
            <person name="Kosugi H."/>
            <person name="Hosoyama A."/>
            <person name="Fukui S."/>
            <person name="Nagai Y."/>
            <person name="Nishijima K."/>
            <person name="Otsuka R."/>
            <person name="Nakazawa H."/>
            <person name="Takamiya M."/>
            <person name="Kato Y."/>
            <person name="Yoshizawa T."/>
            <person name="Tanaka T."/>
            <person name="Kudoh Y."/>
            <person name="Yamazaki J."/>
            <person name="Kushida N."/>
            <person name="Oguchi A."/>
            <person name="Aoki K."/>
            <person name="Masuda S."/>
            <person name="Yanagii M."/>
            <person name="Nishimura M."/>
            <person name="Yamagishi A."/>
            <person name="Oshima T."/>
            <person name="Kikuchi H."/>
        </authorList>
    </citation>
    <scope>NUCLEOTIDE SEQUENCE [LARGE SCALE GENOMIC DNA]</scope>
    <source>
        <strain>DSM 16993 / JCM 10545 / NBRC 100140 / 7</strain>
    </source>
</reference>
<reference key="2">
    <citation type="journal article" date="2004" name="J. Inorg. Biochem.">
        <title>Structure and direct electrochemistry of cytochrome P450 from the thermoacidophilic crenarchaeon, Sulfolobus tokodaii strain 7.</title>
        <authorList>
            <person name="Oku Y."/>
            <person name="Ohtaki A."/>
            <person name="Kamitori S."/>
            <person name="Nakamura N."/>
            <person name="Yohda M."/>
            <person name="Ohno H."/>
            <person name="Kawarabayasi Y."/>
        </authorList>
    </citation>
    <scope>X-RAY CRYSTALLOGRAPHY (3.0 ANGSTROMS) IN COMPLEX WITH HEME</scope>
    <scope>TEMPERATURE DEPENDENCE</scope>
    <source>
        <strain>DSM 16993 / JCM 10545 / NBRC 100140 / 7</strain>
    </source>
</reference>
<proteinExistence type="evidence at protein level"/>
<name>CP119_SULTO</name>
<evidence type="ECO:0000250" key="1"/>
<evidence type="ECO:0000269" key="2">
    <source>
    </source>
</evidence>
<evidence type="ECO:0000305" key="3"/>
<evidence type="ECO:0007829" key="4">
    <source>
        <dbReference type="PDB" id="3B4X"/>
    </source>
</evidence>
<sequence>MYDWFKQMRKESPVYYDGKVWNLFKYEDCKMVLNDHKRFSSNLTGYNDKLEMLRSGKVFFDIPTRYTMLTSDPPLHDELRNLTADAFNPSNLPVDFVREVTVKLLSELDEEFDVIESFAIPLPILVISKMLGINPDVKKVKDWSDLVALRLGRADEIFSIGRKYLELISFSKKELDSRKGKEIVDLTGKIANSNLSELEKEGYFILLMIAGNETTTNLIGNAIEDFTLYNSWDYVREKGALKAVEEALRFSPPVMRTIRVTKEKVKIRDQVIDEGELVRVWIASANRDEEVFKDPDSFIPDRTPNPHLSFGSGIHLCLGAPLARLEARIALEEFAKKFRVKEIVKKEKIDNEVLNGYRKLVVRVERA</sequence>
<organism>
    <name type="scientific">Sulfurisphaera tokodaii (strain DSM 16993 / JCM 10545 / NBRC 100140 / 7)</name>
    <name type="common">Sulfolobus tokodaii</name>
    <dbReference type="NCBI Taxonomy" id="273063"/>
    <lineage>
        <taxon>Archaea</taxon>
        <taxon>Thermoproteota</taxon>
        <taxon>Thermoprotei</taxon>
        <taxon>Sulfolobales</taxon>
        <taxon>Sulfolobaceae</taxon>
        <taxon>Sulfurisphaera</taxon>
    </lineage>
</organism>
<dbReference type="EC" id="1.14.-.-"/>
<dbReference type="EMBL" id="BA000023">
    <property type="protein sequence ID" value="BAK54472.1"/>
    <property type="molecule type" value="Genomic_DNA"/>
</dbReference>
<dbReference type="RefSeq" id="WP_010979165.1">
    <property type="nucleotide sequence ID" value="NC_003106.2"/>
</dbReference>
<dbReference type="PDB" id="1UE8">
    <property type="method" value="X-ray"/>
    <property type="resolution" value="3.00 A"/>
    <property type="chains" value="A=1-367"/>
</dbReference>
<dbReference type="PDB" id="3B4X">
    <property type="method" value="X-ray"/>
    <property type="resolution" value="1.94 A"/>
    <property type="chains" value="A=1-367"/>
</dbReference>
<dbReference type="PDBsum" id="1UE8"/>
<dbReference type="PDBsum" id="3B4X"/>
<dbReference type="SMR" id="Q972I2"/>
<dbReference type="STRING" id="273063.STK_11480"/>
<dbReference type="GeneID" id="1459138"/>
<dbReference type="KEGG" id="sto:STK_11480"/>
<dbReference type="PATRIC" id="fig|273063.9.peg.1301"/>
<dbReference type="eggNOG" id="arCOG02814">
    <property type="taxonomic scope" value="Archaea"/>
</dbReference>
<dbReference type="OrthoDB" id="40089at2157"/>
<dbReference type="BRENDA" id="1.11.2.1">
    <property type="organism ID" value="15396"/>
</dbReference>
<dbReference type="BRENDA" id="1.14.13.B28">
    <property type="organism ID" value="15396"/>
</dbReference>
<dbReference type="EvolutionaryTrace" id="Q972I2"/>
<dbReference type="Proteomes" id="UP000001015">
    <property type="component" value="Chromosome"/>
</dbReference>
<dbReference type="GO" id="GO:0005737">
    <property type="term" value="C:cytoplasm"/>
    <property type="evidence" value="ECO:0007669"/>
    <property type="project" value="UniProtKB-SubCell"/>
</dbReference>
<dbReference type="GO" id="GO:0020037">
    <property type="term" value="F:heme binding"/>
    <property type="evidence" value="ECO:0007669"/>
    <property type="project" value="InterPro"/>
</dbReference>
<dbReference type="GO" id="GO:0005506">
    <property type="term" value="F:iron ion binding"/>
    <property type="evidence" value="ECO:0007669"/>
    <property type="project" value="InterPro"/>
</dbReference>
<dbReference type="GO" id="GO:0004497">
    <property type="term" value="F:monooxygenase activity"/>
    <property type="evidence" value="ECO:0007669"/>
    <property type="project" value="UniProtKB-KW"/>
</dbReference>
<dbReference type="GO" id="GO:0016705">
    <property type="term" value="F:oxidoreductase activity, acting on paired donors, with incorporation or reduction of molecular oxygen"/>
    <property type="evidence" value="ECO:0007669"/>
    <property type="project" value="InterPro"/>
</dbReference>
<dbReference type="CDD" id="cd11032">
    <property type="entry name" value="P450_EryK-like"/>
    <property type="match status" value="1"/>
</dbReference>
<dbReference type="Gene3D" id="1.10.630.10">
    <property type="entry name" value="Cytochrome P450"/>
    <property type="match status" value="1"/>
</dbReference>
<dbReference type="InterPro" id="IPR053518">
    <property type="entry name" value="CYP450_119-like"/>
</dbReference>
<dbReference type="InterPro" id="IPR001128">
    <property type="entry name" value="Cyt_P450"/>
</dbReference>
<dbReference type="InterPro" id="IPR002397">
    <property type="entry name" value="Cyt_P450_B"/>
</dbReference>
<dbReference type="InterPro" id="IPR017972">
    <property type="entry name" value="Cyt_P450_CS"/>
</dbReference>
<dbReference type="InterPro" id="IPR036396">
    <property type="entry name" value="Cyt_P450_sf"/>
</dbReference>
<dbReference type="NCBIfam" id="NF041177">
    <property type="entry name" value="Cyp119_Thmprot"/>
    <property type="match status" value="1"/>
</dbReference>
<dbReference type="PANTHER" id="PTHR46696:SF1">
    <property type="entry name" value="CYTOCHROME P450 YJIB-RELATED"/>
    <property type="match status" value="1"/>
</dbReference>
<dbReference type="PANTHER" id="PTHR46696">
    <property type="entry name" value="P450, PUTATIVE (EUROFUNG)-RELATED"/>
    <property type="match status" value="1"/>
</dbReference>
<dbReference type="Pfam" id="PF00067">
    <property type="entry name" value="p450"/>
    <property type="match status" value="1"/>
</dbReference>
<dbReference type="PRINTS" id="PR00359">
    <property type="entry name" value="BP450"/>
</dbReference>
<dbReference type="PRINTS" id="PR00385">
    <property type="entry name" value="P450"/>
</dbReference>
<dbReference type="SUPFAM" id="SSF48264">
    <property type="entry name" value="Cytochrome P450"/>
    <property type="match status" value="1"/>
</dbReference>
<dbReference type="PROSITE" id="PS00086">
    <property type="entry name" value="CYTOCHROME_P450"/>
    <property type="match status" value="1"/>
</dbReference>